<sequence length="405" mass="45296">MADVKKVVLAYSGGLDTSVILKWLQDTYNCEVVTFTADLGQGEEVEPARAKAQALGVKEIYIDDLREEFVRDFVFPMFRANTVYEGEYLLGTSIARPLIAKRLIEIANETGADAISHGATGKGNDQVRFELGAYALKPGVKVIAPWREWDLLSREKLMDYAEKHAIPIERHGKKKSPYSMDANLLHISYEGGVLEDTWTEHEEDMWRWTKSPEAAPDTPTYIELTYRKGDIVAIDGKDMTPAQVLAELNRIGGENGIGRLDIVENRYVGMKSRGCYETPGGTIMLKAHRAIESITLDREVAHLKDELMPKYASLIYNGYWWSPERSMLQQMIDASQVNVNGVVRLKLYKGNVIVVGRKSDDSLFDANIATFEEDGGAYNQADAGGFIKLNALRMRIAAGKGRTQF</sequence>
<protein>
    <recommendedName>
        <fullName evidence="1">Argininosuccinate synthase</fullName>
        <ecNumber evidence="1">6.3.4.5</ecNumber>
    </recommendedName>
    <alternativeName>
        <fullName evidence="1">Citrulline--aspartate ligase</fullName>
    </alternativeName>
</protein>
<feature type="chain" id="PRO_1000000427" description="Argininosuccinate synthase">
    <location>
        <begin position="1"/>
        <end position="405"/>
    </location>
</feature>
<feature type="binding site" evidence="1">
    <location>
        <begin position="10"/>
        <end position="18"/>
    </location>
    <ligand>
        <name>ATP</name>
        <dbReference type="ChEBI" id="CHEBI:30616"/>
    </ligand>
</feature>
<feature type="binding site" evidence="1">
    <location>
        <position position="37"/>
    </location>
    <ligand>
        <name>ATP</name>
        <dbReference type="ChEBI" id="CHEBI:30616"/>
    </ligand>
</feature>
<feature type="binding site" evidence="1">
    <location>
        <position position="88"/>
    </location>
    <ligand>
        <name>L-citrulline</name>
        <dbReference type="ChEBI" id="CHEBI:57743"/>
    </ligand>
</feature>
<feature type="binding site" evidence="1">
    <location>
        <position position="93"/>
    </location>
    <ligand>
        <name>L-citrulline</name>
        <dbReference type="ChEBI" id="CHEBI:57743"/>
    </ligand>
</feature>
<feature type="binding site" evidence="1">
    <location>
        <position position="118"/>
    </location>
    <ligand>
        <name>ATP</name>
        <dbReference type="ChEBI" id="CHEBI:30616"/>
    </ligand>
</feature>
<feature type="binding site" evidence="1">
    <location>
        <position position="120"/>
    </location>
    <ligand>
        <name>L-aspartate</name>
        <dbReference type="ChEBI" id="CHEBI:29991"/>
    </ligand>
</feature>
<feature type="binding site" evidence="1">
    <location>
        <position position="124"/>
    </location>
    <ligand>
        <name>L-aspartate</name>
        <dbReference type="ChEBI" id="CHEBI:29991"/>
    </ligand>
</feature>
<feature type="binding site" evidence="1">
    <location>
        <position position="124"/>
    </location>
    <ligand>
        <name>L-citrulline</name>
        <dbReference type="ChEBI" id="CHEBI:57743"/>
    </ligand>
</feature>
<feature type="binding site" evidence="1">
    <location>
        <position position="125"/>
    </location>
    <ligand>
        <name>L-aspartate</name>
        <dbReference type="ChEBI" id="CHEBI:29991"/>
    </ligand>
</feature>
<feature type="binding site" evidence="1">
    <location>
        <position position="128"/>
    </location>
    <ligand>
        <name>L-citrulline</name>
        <dbReference type="ChEBI" id="CHEBI:57743"/>
    </ligand>
</feature>
<feature type="binding site" evidence="1">
    <location>
        <position position="179"/>
    </location>
    <ligand>
        <name>L-citrulline</name>
        <dbReference type="ChEBI" id="CHEBI:57743"/>
    </ligand>
</feature>
<feature type="binding site" evidence="1">
    <location>
        <position position="188"/>
    </location>
    <ligand>
        <name>L-citrulline</name>
        <dbReference type="ChEBI" id="CHEBI:57743"/>
    </ligand>
</feature>
<feature type="binding site" evidence="1">
    <location>
        <position position="264"/>
    </location>
    <ligand>
        <name>L-citrulline</name>
        <dbReference type="ChEBI" id="CHEBI:57743"/>
    </ligand>
</feature>
<feature type="binding site" evidence="1">
    <location>
        <position position="276"/>
    </location>
    <ligand>
        <name>L-citrulline</name>
        <dbReference type="ChEBI" id="CHEBI:57743"/>
    </ligand>
</feature>
<evidence type="ECO:0000255" key="1">
    <source>
        <dbReference type="HAMAP-Rule" id="MF_00005"/>
    </source>
</evidence>
<dbReference type="EC" id="6.3.4.5" evidence="1"/>
<dbReference type="EMBL" id="CP000304">
    <property type="protein sequence ID" value="ABP78898.1"/>
    <property type="molecule type" value="Genomic_DNA"/>
</dbReference>
<dbReference type="RefSeq" id="WP_011912385.1">
    <property type="nucleotide sequence ID" value="NC_009434.1"/>
</dbReference>
<dbReference type="SMR" id="A4VIU7"/>
<dbReference type="KEGG" id="psa:PST_1203"/>
<dbReference type="eggNOG" id="COG0137">
    <property type="taxonomic scope" value="Bacteria"/>
</dbReference>
<dbReference type="HOGENOM" id="CLU_032784_4_2_6"/>
<dbReference type="UniPathway" id="UPA00068">
    <property type="reaction ID" value="UER00113"/>
</dbReference>
<dbReference type="Proteomes" id="UP000000233">
    <property type="component" value="Chromosome"/>
</dbReference>
<dbReference type="GO" id="GO:0005737">
    <property type="term" value="C:cytoplasm"/>
    <property type="evidence" value="ECO:0007669"/>
    <property type="project" value="UniProtKB-SubCell"/>
</dbReference>
<dbReference type="GO" id="GO:0004055">
    <property type="term" value="F:argininosuccinate synthase activity"/>
    <property type="evidence" value="ECO:0007669"/>
    <property type="project" value="UniProtKB-UniRule"/>
</dbReference>
<dbReference type="GO" id="GO:0005524">
    <property type="term" value="F:ATP binding"/>
    <property type="evidence" value="ECO:0007669"/>
    <property type="project" value="UniProtKB-UniRule"/>
</dbReference>
<dbReference type="GO" id="GO:0000053">
    <property type="term" value="P:argininosuccinate metabolic process"/>
    <property type="evidence" value="ECO:0007669"/>
    <property type="project" value="TreeGrafter"/>
</dbReference>
<dbReference type="GO" id="GO:0006526">
    <property type="term" value="P:L-arginine biosynthetic process"/>
    <property type="evidence" value="ECO:0007669"/>
    <property type="project" value="UniProtKB-UniRule"/>
</dbReference>
<dbReference type="GO" id="GO:0000050">
    <property type="term" value="P:urea cycle"/>
    <property type="evidence" value="ECO:0007669"/>
    <property type="project" value="TreeGrafter"/>
</dbReference>
<dbReference type="CDD" id="cd01999">
    <property type="entry name" value="ASS"/>
    <property type="match status" value="1"/>
</dbReference>
<dbReference type="FunFam" id="1.20.5.470:FF:000001">
    <property type="entry name" value="Argininosuccinate synthase"/>
    <property type="match status" value="1"/>
</dbReference>
<dbReference type="FunFam" id="3.40.50.620:FF:000019">
    <property type="entry name" value="Argininosuccinate synthase"/>
    <property type="match status" value="1"/>
</dbReference>
<dbReference type="FunFam" id="3.90.1260.10:FF:000001">
    <property type="entry name" value="Argininosuccinate synthase"/>
    <property type="match status" value="1"/>
</dbReference>
<dbReference type="Gene3D" id="3.90.1260.10">
    <property type="entry name" value="Argininosuccinate synthetase, chain A, domain 2"/>
    <property type="match status" value="1"/>
</dbReference>
<dbReference type="Gene3D" id="3.40.50.620">
    <property type="entry name" value="HUPs"/>
    <property type="match status" value="1"/>
</dbReference>
<dbReference type="Gene3D" id="1.20.5.470">
    <property type="entry name" value="Single helix bin"/>
    <property type="match status" value="1"/>
</dbReference>
<dbReference type="HAMAP" id="MF_00005">
    <property type="entry name" value="Arg_succ_synth_type1"/>
    <property type="match status" value="1"/>
</dbReference>
<dbReference type="InterPro" id="IPR048268">
    <property type="entry name" value="Arginosuc_syn_C"/>
</dbReference>
<dbReference type="InterPro" id="IPR048267">
    <property type="entry name" value="Arginosuc_syn_N"/>
</dbReference>
<dbReference type="InterPro" id="IPR001518">
    <property type="entry name" value="Arginosuc_synth"/>
</dbReference>
<dbReference type="InterPro" id="IPR018223">
    <property type="entry name" value="Arginosuc_synth_CS"/>
</dbReference>
<dbReference type="InterPro" id="IPR023434">
    <property type="entry name" value="Arginosuc_synth_type_1_subfam"/>
</dbReference>
<dbReference type="InterPro" id="IPR024074">
    <property type="entry name" value="AS_cat/multimer_dom_body"/>
</dbReference>
<dbReference type="InterPro" id="IPR014729">
    <property type="entry name" value="Rossmann-like_a/b/a_fold"/>
</dbReference>
<dbReference type="NCBIfam" id="TIGR00032">
    <property type="entry name" value="argG"/>
    <property type="match status" value="1"/>
</dbReference>
<dbReference type="NCBIfam" id="NF001770">
    <property type="entry name" value="PRK00509.1"/>
    <property type="match status" value="1"/>
</dbReference>
<dbReference type="PANTHER" id="PTHR11587">
    <property type="entry name" value="ARGININOSUCCINATE SYNTHASE"/>
    <property type="match status" value="1"/>
</dbReference>
<dbReference type="PANTHER" id="PTHR11587:SF2">
    <property type="entry name" value="ARGININOSUCCINATE SYNTHASE"/>
    <property type="match status" value="1"/>
</dbReference>
<dbReference type="Pfam" id="PF20979">
    <property type="entry name" value="Arginosuc_syn_C"/>
    <property type="match status" value="1"/>
</dbReference>
<dbReference type="Pfam" id="PF00764">
    <property type="entry name" value="Arginosuc_synth"/>
    <property type="match status" value="1"/>
</dbReference>
<dbReference type="SUPFAM" id="SSF52402">
    <property type="entry name" value="Adenine nucleotide alpha hydrolases-like"/>
    <property type="match status" value="1"/>
</dbReference>
<dbReference type="SUPFAM" id="SSF69864">
    <property type="entry name" value="Argininosuccinate synthetase, C-terminal domain"/>
    <property type="match status" value="1"/>
</dbReference>
<dbReference type="PROSITE" id="PS00564">
    <property type="entry name" value="ARGININOSUCCIN_SYN_1"/>
    <property type="match status" value="1"/>
</dbReference>
<dbReference type="PROSITE" id="PS00565">
    <property type="entry name" value="ARGININOSUCCIN_SYN_2"/>
    <property type="match status" value="1"/>
</dbReference>
<name>ASSY_STUS1</name>
<comment type="catalytic activity">
    <reaction evidence="1">
        <text>L-citrulline + L-aspartate + ATP = 2-(N(omega)-L-arginino)succinate + AMP + diphosphate + H(+)</text>
        <dbReference type="Rhea" id="RHEA:10932"/>
        <dbReference type="ChEBI" id="CHEBI:15378"/>
        <dbReference type="ChEBI" id="CHEBI:29991"/>
        <dbReference type="ChEBI" id="CHEBI:30616"/>
        <dbReference type="ChEBI" id="CHEBI:33019"/>
        <dbReference type="ChEBI" id="CHEBI:57472"/>
        <dbReference type="ChEBI" id="CHEBI:57743"/>
        <dbReference type="ChEBI" id="CHEBI:456215"/>
        <dbReference type="EC" id="6.3.4.5"/>
    </reaction>
</comment>
<comment type="pathway">
    <text evidence="1">Amino-acid biosynthesis; L-arginine biosynthesis; L-arginine from L-ornithine and carbamoyl phosphate: step 2/3.</text>
</comment>
<comment type="subunit">
    <text evidence="1">Homotetramer.</text>
</comment>
<comment type="subcellular location">
    <subcellularLocation>
        <location evidence="1">Cytoplasm</location>
    </subcellularLocation>
</comment>
<comment type="similarity">
    <text evidence="1">Belongs to the argininosuccinate synthase family. Type 1 subfamily.</text>
</comment>
<gene>
    <name evidence="1" type="primary">argG</name>
    <name type="ordered locus">PST_1203</name>
</gene>
<accession>A4VIU7</accession>
<proteinExistence type="inferred from homology"/>
<organism>
    <name type="scientific">Stutzerimonas stutzeri (strain A1501)</name>
    <name type="common">Pseudomonas stutzeri</name>
    <dbReference type="NCBI Taxonomy" id="379731"/>
    <lineage>
        <taxon>Bacteria</taxon>
        <taxon>Pseudomonadati</taxon>
        <taxon>Pseudomonadota</taxon>
        <taxon>Gammaproteobacteria</taxon>
        <taxon>Pseudomonadales</taxon>
        <taxon>Pseudomonadaceae</taxon>
        <taxon>Stutzerimonas</taxon>
    </lineage>
</organism>
<reference key="1">
    <citation type="journal article" date="2008" name="Proc. Natl. Acad. Sci. U.S.A.">
        <title>Nitrogen fixation island and rhizosphere competence traits in the genome of root-associated Pseudomonas stutzeri A1501.</title>
        <authorList>
            <person name="Yan Y."/>
            <person name="Yang J."/>
            <person name="Dou Y."/>
            <person name="Chen M."/>
            <person name="Ping S."/>
            <person name="Peng J."/>
            <person name="Lu W."/>
            <person name="Zhang W."/>
            <person name="Yao Z."/>
            <person name="Li H."/>
            <person name="Liu W."/>
            <person name="He S."/>
            <person name="Geng L."/>
            <person name="Zhang X."/>
            <person name="Yang F."/>
            <person name="Yu H."/>
            <person name="Zhan Y."/>
            <person name="Li D."/>
            <person name="Lin Z."/>
            <person name="Wang Y."/>
            <person name="Elmerich C."/>
            <person name="Lin M."/>
            <person name="Jin Q."/>
        </authorList>
    </citation>
    <scope>NUCLEOTIDE SEQUENCE [LARGE SCALE GENOMIC DNA]</scope>
    <source>
        <strain>A1501</strain>
    </source>
</reference>
<keyword id="KW-0028">Amino-acid biosynthesis</keyword>
<keyword id="KW-0055">Arginine biosynthesis</keyword>
<keyword id="KW-0067">ATP-binding</keyword>
<keyword id="KW-0963">Cytoplasm</keyword>
<keyword id="KW-0436">Ligase</keyword>
<keyword id="KW-0547">Nucleotide-binding</keyword>
<keyword id="KW-1185">Reference proteome</keyword>